<evidence type="ECO:0000255" key="1">
    <source>
        <dbReference type="HAMAP-Rule" id="MF_00295"/>
    </source>
</evidence>
<accession>B9KA88</accession>
<dbReference type="EC" id="2.3.1.31" evidence="1"/>
<dbReference type="EMBL" id="CP000916">
    <property type="protein sequence ID" value="ACM23871.1"/>
    <property type="molecule type" value="Genomic_DNA"/>
</dbReference>
<dbReference type="RefSeq" id="WP_015920109.1">
    <property type="nucleotide sequence ID" value="NC_011978.1"/>
</dbReference>
<dbReference type="SMR" id="B9KA88"/>
<dbReference type="STRING" id="309803.CTN_1695"/>
<dbReference type="KEGG" id="tna:CTN_1695"/>
<dbReference type="eggNOG" id="COG1897">
    <property type="taxonomic scope" value="Bacteria"/>
</dbReference>
<dbReference type="HOGENOM" id="CLU_057851_0_1_0"/>
<dbReference type="UniPathway" id="UPA00051">
    <property type="reaction ID" value="UER00074"/>
</dbReference>
<dbReference type="Proteomes" id="UP000000445">
    <property type="component" value="Chromosome"/>
</dbReference>
<dbReference type="GO" id="GO:0005737">
    <property type="term" value="C:cytoplasm"/>
    <property type="evidence" value="ECO:0007669"/>
    <property type="project" value="UniProtKB-SubCell"/>
</dbReference>
<dbReference type="GO" id="GO:0004414">
    <property type="term" value="F:homoserine O-acetyltransferase activity"/>
    <property type="evidence" value="ECO:0007669"/>
    <property type="project" value="UniProtKB-EC"/>
</dbReference>
<dbReference type="GO" id="GO:0008899">
    <property type="term" value="F:homoserine O-succinyltransferase activity"/>
    <property type="evidence" value="ECO:0007669"/>
    <property type="project" value="UniProtKB-UniRule"/>
</dbReference>
<dbReference type="GO" id="GO:0019281">
    <property type="term" value="P:L-methionine biosynthetic process from homoserine via O-succinyl-L-homoserine and cystathionine"/>
    <property type="evidence" value="ECO:0007669"/>
    <property type="project" value="InterPro"/>
</dbReference>
<dbReference type="CDD" id="cd03131">
    <property type="entry name" value="GATase1_HTS"/>
    <property type="match status" value="1"/>
</dbReference>
<dbReference type="FunFam" id="3.40.50.880:FF:000004">
    <property type="entry name" value="Homoserine O-succinyltransferase"/>
    <property type="match status" value="1"/>
</dbReference>
<dbReference type="Gene3D" id="3.40.50.880">
    <property type="match status" value="1"/>
</dbReference>
<dbReference type="HAMAP" id="MF_00295">
    <property type="entry name" value="MetA_acyltransf"/>
    <property type="match status" value="1"/>
</dbReference>
<dbReference type="InterPro" id="IPR029062">
    <property type="entry name" value="Class_I_gatase-like"/>
</dbReference>
<dbReference type="InterPro" id="IPR005697">
    <property type="entry name" value="HST_MetA"/>
</dbReference>
<dbReference type="InterPro" id="IPR033752">
    <property type="entry name" value="MetA_family"/>
</dbReference>
<dbReference type="NCBIfam" id="TIGR01001">
    <property type="entry name" value="metA"/>
    <property type="match status" value="1"/>
</dbReference>
<dbReference type="PANTHER" id="PTHR20919">
    <property type="entry name" value="HOMOSERINE O-SUCCINYLTRANSFERASE"/>
    <property type="match status" value="1"/>
</dbReference>
<dbReference type="PANTHER" id="PTHR20919:SF0">
    <property type="entry name" value="HOMOSERINE O-SUCCINYLTRANSFERASE"/>
    <property type="match status" value="1"/>
</dbReference>
<dbReference type="Pfam" id="PF04204">
    <property type="entry name" value="HTS"/>
    <property type="match status" value="1"/>
</dbReference>
<dbReference type="PIRSF" id="PIRSF000450">
    <property type="entry name" value="H_ser_succinyltr"/>
    <property type="match status" value="1"/>
</dbReference>
<dbReference type="SUPFAM" id="SSF52317">
    <property type="entry name" value="Class I glutamine amidotransferase-like"/>
    <property type="match status" value="1"/>
</dbReference>
<reference key="1">
    <citation type="submission" date="2007-11" db="EMBL/GenBank/DDBJ databases">
        <title>The genome sequence of the hyperthermophilic bacterium Thermotoga neapolitana.</title>
        <authorList>
            <person name="Lim S.K."/>
            <person name="Kim J.S."/>
            <person name="Cha S.H."/>
            <person name="Park B.C."/>
            <person name="Lee D.S."/>
            <person name="Tae H.S."/>
            <person name="Kim S.-J."/>
            <person name="Kim J.J."/>
            <person name="Park K.J."/>
            <person name="Lee S.Y."/>
        </authorList>
    </citation>
    <scope>NUCLEOTIDE SEQUENCE [LARGE SCALE GENOMIC DNA]</scope>
    <source>
        <strain>ATCC 49049 / DSM 4359 / NBRC 107923 / NS-E</strain>
    </source>
</reference>
<gene>
    <name evidence="1" type="primary">metAA</name>
    <name type="ordered locus">CTN_1695</name>
</gene>
<name>METAA_THENN</name>
<protein>
    <recommendedName>
        <fullName evidence="1">Homoserine O-acetyltransferase</fullName>
        <shortName evidence="1">HAT</shortName>
        <ecNumber evidence="1">2.3.1.31</ecNumber>
    </recommendedName>
    <alternativeName>
        <fullName evidence="1">Homoserine transacetylase</fullName>
        <shortName evidence="1">HTA</shortName>
    </alternativeName>
</protein>
<proteinExistence type="inferred from homology"/>
<sequence>MPINVPSGLPAVKILAKEGIFVMTEKRAIHQDIRPLEILILNLMPDKIKTEIQLLRLLGNTPLQVNVTLLYTESHTPKHTPIEHILRFYTTFSAVKDRKFDGFIITGAPVELLPFEEVDYWDELTEIMEWSRHNVYSTMFICWAAQAGLYYFYGVPKYELPQKLSGVYRHRVTKETVLFRGHDDFFWAPHSRYTEVRKEDIEKIPELEILAESDEAGVYVVANKSERQIFVTGHPEYDRYTLRDEYYRDINRNLKVPIPANYFPDNDPTKTPVLTWWSHAHLFFSNWLNYCIYQKTPYKLEDIH</sequence>
<comment type="function">
    <text evidence="1">Transfers an acetyl group from acetyl-CoA to L-homoserine, forming acetyl-L-homoserine.</text>
</comment>
<comment type="catalytic activity">
    <reaction evidence="1">
        <text>L-homoserine + acetyl-CoA = O-acetyl-L-homoserine + CoA</text>
        <dbReference type="Rhea" id="RHEA:13701"/>
        <dbReference type="ChEBI" id="CHEBI:57287"/>
        <dbReference type="ChEBI" id="CHEBI:57288"/>
        <dbReference type="ChEBI" id="CHEBI:57476"/>
        <dbReference type="ChEBI" id="CHEBI:57716"/>
        <dbReference type="EC" id="2.3.1.31"/>
    </reaction>
</comment>
<comment type="pathway">
    <text evidence="1">Amino-acid biosynthesis; L-methionine biosynthesis via de novo pathway; O-acetyl-L-homoserine from L-homoserine: step 1/1.</text>
</comment>
<comment type="subcellular location">
    <subcellularLocation>
        <location evidence="1">Cytoplasm</location>
    </subcellularLocation>
</comment>
<comment type="similarity">
    <text evidence="1">Belongs to the MetA family.</text>
</comment>
<keyword id="KW-0012">Acyltransferase</keyword>
<keyword id="KW-0028">Amino-acid biosynthesis</keyword>
<keyword id="KW-0963">Cytoplasm</keyword>
<keyword id="KW-0486">Methionine biosynthesis</keyword>
<keyword id="KW-0808">Transferase</keyword>
<organism>
    <name type="scientific">Thermotoga neapolitana (strain ATCC 49049 / DSM 4359 / NBRC 107923 / NS-E)</name>
    <dbReference type="NCBI Taxonomy" id="309803"/>
    <lineage>
        <taxon>Bacteria</taxon>
        <taxon>Thermotogati</taxon>
        <taxon>Thermotogota</taxon>
        <taxon>Thermotogae</taxon>
        <taxon>Thermotogales</taxon>
        <taxon>Thermotogaceae</taxon>
        <taxon>Thermotoga</taxon>
    </lineage>
</organism>
<feature type="chain" id="PRO_1000132717" description="Homoserine O-acetyltransferase">
    <location>
        <begin position="1"/>
        <end position="304"/>
    </location>
</feature>
<feature type="active site" description="Acyl-thioester intermediate" evidence="1">
    <location>
        <position position="142"/>
    </location>
</feature>
<feature type="active site" description="Proton acceptor" evidence="1">
    <location>
        <position position="234"/>
    </location>
</feature>
<feature type="active site" evidence="1">
    <location>
        <position position="236"/>
    </location>
</feature>
<feature type="binding site" evidence="1">
    <location>
        <position position="163"/>
    </location>
    <ligand>
        <name>substrate</name>
    </ligand>
</feature>
<feature type="binding site" evidence="1">
    <location>
        <position position="191"/>
    </location>
    <ligand>
        <name>substrate</name>
    </ligand>
</feature>
<feature type="binding site" evidence="1">
    <location>
        <position position="248"/>
    </location>
    <ligand>
        <name>substrate</name>
    </ligand>
</feature>
<feature type="site" description="Important for acyl-CoA specificity" evidence="1">
    <location>
        <position position="111"/>
    </location>
</feature>
<feature type="site" description="Important for substrate specificity" evidence="1">
    <location>
        <position position="191"/>
    </location>
</feature>